<keyword id="KW-1185">Reference proteome</keyword>
<accession>Q9SZ95</accession>
<name>FB224_ARATH</name>
<organism>
    <name type="scientific">Arabidopsis thaliana</name>
    <name type="common">Mouse-ear cress</name>
    <dbReference type="NCBI Taxonomy" id="3702"/>
    <lineage>
        <taxon>Eukaryota</taxon>
        <taxon>Viridiplantae</taxon>
        <taxon>Streptophyta</taxon>
        <taxon>Embryophyta</taxon>
        <taxon>Tracheophyta</taxon>
        <taxon>Spermatophyta</taxon>
        <taxon>Magnoliopsida</taxon>
        <taxon>eudicotyledons</taxon>
        <taxon>Gunneridae</taxon>
        <taxon>Pentapetalae</taxon>
        <taxon>rosids</taxon>
        <taxon>malvids</taxon>
        <taxon>Brassicales</taxon>
        <taxon>Brassicaceae</taxon>
        <taxon>Camelineae</taxon>
        <taxon>Arabidopsis</taxon>
    </lineage>
</organism>
<feature type="chain" id="PRO_0000283493" description="Putative F-box protein At4g09790">
    <location>
        <begin position="1"/>
        <end position="351"/>
    </location>
</feature>
<feature type="domain" description="F-box" evidence="1">
    <location>
        <begin position="1"/>
        <end position="51"/>
    </location>
</feature>
<reference key="1">
    <citation type="journal article" date="1999" name="Nature">
        <title>Sequence and analysis of chromosome 4 of the plant Arabidopsis thaliana.</title>
        <authorList>
            <person name="Mayer K.F.X."/>
            <person name="Schueller C."/>
            <person name="Wambutt R."/>
            <person name="Murphy G."/>
            <person name="Volckaert G."/>
            <person name="Pohl T."/>
            <person name="Duesterhoeft A."/>
            <person name="Stiekema W."/>
            <person name="Entian K.-D."/>
            <person name="Terryn N."/>
            <person name="Harris B."/>
            <person name="Ansorge W."/>
            <person name="Brandt P."/>
            <person name="Grivell L.A."/>
            <person name="Rieger M."/>
            <person name="Weichselgartner M."/>
            <person name="de Simone V."/>
            <person name="Obermaier B."/>
            <person name="Mache R."/>
            <person name="Mueller M."/>
            <person name="Kreis M."/>
            <person name="Delseny M."/>
            <person name="Puigdomenech P."/>
            <person name="Watson M."/>
            <person name="Schmidtheini T."/>
            <person name="Reichert B."/>
            <person name="Portetelle D."/>
            <person name="Perez-Alonso M."/>
            <person name="Boutry M."/>
            <person name="Bancroft I."/>
            <person name="Vos P."/>
            <person name="Hoheisel J."/>
            <person name="Zimmermann W."/>
            <person name="Wedler H."/>
            <person name="Ridley P."/>
            <person name="Langham S.-A."/>
            <person name="McCullagh B."/>
            <person name="Bilham L."/>
            <person name="Robben J."/>
            <person name="van der Schueren J."/>
            <person name="Grymonprez B."/>
            <person name="Chuang Y.-J."/>
            <person name="Vandenbussche F."/>
            <person name="Braeken M."/>
            <person name="Weltjens I."/>
            <person name="Voet M."/>
            <person name="Bastiaens I."/>
            <person name="Aert R."/>
            <person name="Defoor E."/>
            <person name="Weitzenegger T."/>
            <person name="Bothe G."/>
            <person name="Ramsperger U."/>
            <person name="Hilbert H."/>
            <person name="Braun M."/>
            <person name="Holzer E."/>
            <person name="Brandt A."/>
            <person name="Peters S."/>
            <person name="van Staveren M."/>
            <person name="Dirkse W."/>
            <person name="Mooijman P."/>
            <person name="Klein Lankhorst R."/>
            <person name="Rose M."/>
            <person name="Hauf J."/>
            <person name="Koetter P."/>
            <person name="Berneiser S."/>
            <person name="Hempel S."/>
            <person name="Feldpausch M."/>
            <person name="Lamberth S."/>
            <person name="Van den Daele H."/>
            <person name="De Keyser A."/>
            <person name="Buysshaert C."/>
            <person name="Gielen J."/>
            <person name="Villarroel R."/>
            <person name="De Clercq R."/>
            <person name="van Montagu M."/>
            <person name="Rogers J."/>
            <person name="Cronin A."/>
            <person name="Quail M.A."/>
            <person name="Bray-Allen S."/>
            <person name="Clark L."/>
            <person name="Doggett J."/>
            <person name="Hall S."/>
            <person name="Kay M."/>
            <person name="Lennard N."/>
            <person name="McLay K."/>
            <person name="Mayes R."/>
            <person name="Pettett A."/>
            <person name="Rajandream M.A."/>
            <person name="Lyne M."/>
            <person name="Benes V."/>
            <person name="Rechmann S."/>
            <person name="Borkova D."/>
            <person name="Bloecker H."/>
            <person name="Scharfe M."/>
            <person name="Grimm M."/>
            <person name="Loehnert T.-H."/>
            <person name="Dose S."/>
            <person name="de Haan M."/>
            <person name="Maarse A.C."/>
            <person name="Schaefer M."/>
            <person name="Mueller-Auer S."/>
            <person name="Gabel C."/>
            <person name="Fuchs M."/>
            <person name="Fartmann B."/>
            <person name="Granderath K."/>
            <person name="Dauner D."/>
            <person name="Herzl A."/>
            <person name="Neumann S."/>
            <person name="Argiriou A."/>
            <person name="Vitale D."/>
            <person name="Liguori R."/>
            <person name="Piravandi E."/>
            <person name="Massenet O."/>
            <person name="Quigley F."/>
            <person name="Clabauld G."/>
            <person name="Muendlein A."/>
            <person name="Felber R."/>
            <person name="Schnabl S."/>
            <person name="Hiller R."/>
            <person name="Schmidt W."/>
            <person name="Lecharny A."/>
            <person name="Aubourg S."/>
            <person name="Chefdor F."/>
            <person name="Cooke R."/>
            <person name="Berger C."/>
            <person name="Monfort A."/>
            <person name="Casacuberta E."/>
            <person name="Gibbons T."/>
            <person name="Weber N."/>
            <person name="Vandenbol M."/>
            <person name="Bargues M."/>
            <person name="Terol J."/>
            <person name="Torres A."/>
            <person name="Perez-Perez A."/>
            <person name="Purnelle B."/>
            <person name="Bent E."/>
            <person name="Johnson S."/>
            <person name="Tacon D."/>
            <person name="Jesse T."/>
            <person name="Heijnen L."/>
            <person name="Schwarz S."/>
            <person name="Scholler P."/>
            <person name="Heber S."/>
            <person name="Francs P."/>
            <person name="Bielke C."/>
            <person name="Frishman D."/>
            <person name="Haase D."/>
            <person name="Lemcke K."/>
            <person name="Mewes H.-W."/>
            <person name="Stocker S."/>
            <person name="Zaccaria P."/>
            <person name="Bevan M."/>
            <person name="Wilson R.K."/>
            <person name="de la Bastide M."/>
            <person name="Habermann K."/>
            <person name="Parnell L."/>
            <person name="Dedhia N."/>
            <person name="Gnoj L."/>
            <person name="Schutz K."/>
            <person name="Huang E."/>
            <person name="Spiegel L."/>
            <person name="Sekhon M."/>
            <person name="Murray J."/>
            <person name="Sheet P."/>
            <person name="Cordes M."/>
            <person name="Abu-Threideh J."/>
            <person name="Stoneking T."/>
            <person name="Kalicki J."/>
            <person name="Graves T."/>
            <person name="Harmon G."/>
            <person name="Edwards J."/>
            <person name="Latreille P."/>
            <person name="Courtney L."/>
            <person name="Cloud J."/>
            <person name="Abbott A."/>
            <person name="Scott K."/>
            <person name="Johnson D."/>
            <person name="Minx P."/>
            <person name="Bentley D."/>
            <person name="Fulton B."/>
            <person name="Miller N."/>
            <person name="Greco T."/>
            <person name="Kemp K."/>
            <person name="Kramer J."/>
            <person name="Fulton L."/>
            <person name="Mardis E."/>
            <person name="Dante M."/>
            <person name="Pepin K."/>
            <person name="Hillier L.W."/>
            <person name="Nelson J."/>
            <person name="Spieth J."/>
            <person name="Ryan E."/>
            <person name="Andrews S."/>
            <person name="Geisel C."/>
            <person name="Layman D."/>
            <person name="Du H."/>
            <person name="Ali J."/>
            <person name="Berghoff A."/>
            <person name="Jones K."/>
            <person name="Drone K."/>
            <person name="Cotton M."/>
            <person name="Joshu C."/>
            <person name="Antonoiu B."/>
            <person name="Zidanic M."/>
            <person name="Strong C."/>
            <person name="Sun H."/>
            <person name="Lamar B."/>
            <person name="Yordan C."/>
            <person name="Ma P."/>
            <person name="Zhong J."/>
            <person name="Preston R."/>
            <person name="Vil D."/>
            <person name="Shekher M."/>
            <person name="Matero A."/>
            <person name="Shah R."/>
            <person name="Swaby I.K."/>
            <person name="O'Shaughnessy A."/>
            <person name="Rodriguez M."/>
            <person name="Hoffman J."/>
            <person name="Till S."/>
            <person name="Granat S."/>
            <person name="Shohdy N."/>
            <person name="Hasegawa A."/>
            <person name="Hameed A."/>
            <person name="Lodhi M."/>
            <person name="Johnson A."/>
            <person name="Chen E."/>
            <person name="Marra M.A."/>
            <person name="Martienssen R."/>
            <person name="McCombie W.R."/>
        </authorList>
    </citation>
    <scope>NUCLEOTIDE SEQUENCE [LARGE SCALE GENOMIC DNA]</scope>
    <source>
        <strain>cv. Columbia</strain>
    </source>
</reference>
<reference key="2">
    <citation type="journal article" date="2017" name="Plant J.">
        <title>Araport11: a complete reannotation of the Arabidopsis thaliana reference genome.</title>
        <authorList>
            <person name="Cheng C.Y."/>
            <person name="Krishnakumar V."/>
            <person name="Chan A.P."/>
            <person name="Thibaud-Nissen F."/>
            <person name="Schobel S."/>
            <person name="Town C.D."/>
        </authorList>
    </citation>
    <scope>GENOME REANNOTATION</scope>
    <source>
        <strain>cv. Columbia</strain>
    </source>
</reference>
<dbReference type="EMBL" id="AL049482">
    <property type="protein sequence ID" value="CAB39646.1"/>
    <property type="molecule type" value="Genomic_DNA"/>
</dbReference>
<dbReference type="EMBL" id="AL161515">
    <property type="protein sequence ID" value="CAB78102.1"/>
    <property type="molecule type" value="Genomic_DNA"/>
</dbReference>
<dbReference type="EMBL" id="CP002687">
    <property type="status" value="NOT_ANNOTATED_CDS"/>
    <property type="molecule type" value="Genomic_DNA"/>
</dbReference>
<dbReference type="PIR" id="T04027">
    <property type="entry name" value="T04027"/>
</dbReference>
<dbReference type="Araport" id="AT4G09790"/>
<dbReference type="TAIR" id="AT4G09790"/>
<dbReference type="InParanoid" id="Q9SZ95"/>
<dbReference type="PRO" id="PR:Q9SZ95"/>
<dbReference type="Proteomes" id="UP000006548">
    <property type="component" value="Chromosome 4"/>
</dbReference>
<dbReference type="ExpressionAtlas" id="Q9SZ95">
    <property type="expression patterns" value="baseline and differential"/>
</dbReference>
<dbReference type="CDD" id="cd22157">
    <property type="entry name" value="F-box_AtFBW1-like"/>
    <property type="match status" value="1"/>
</dbReference>
<dbReference type="Gene3D" id="1.20.1280.50">
    <property type="match status" value="1"/>
</dbReference>
<dbReference type="InterPro" id="IPR006527">
    <property type="entry name" value="F-box-assoc_dom_typ1"/>
</dbReference>
<dbReference type="InterPro" id="IPR017451">
    <property type="entry name" value="F-box-assoc_interact_dom"/>
</dbReference>
<dbReference type="InterPro" id="IPR036047">
    <property type="entry name" value="F-box-like_dom_sf"/>
</dbReference>
<dbReference type="InterPro" id="IPR001810">
    <property type="entry name" value="F-box_dom"/>
</dbReference>
<dbReference type="NCBIfam" id="TIGR01640">
    <property type="entry name" value="F_box_assoc_1"/>
    <property type="match status" value="1"/>
</dbReference>
<dbReference type="PANTHER" id="PTHR31111">
    <property type="entry name" value="BNAA05G37150D PROTEIN-RELATED"/>
    <property type="match status" value="1"/>
</dbReference>
<dbReference type="PANTHER" id="PTHR31111:SF136">
    <property type="entry name" value="F-BOX ASSOCIATED DOMAIN-CONTAINING PROTEIN"/>
    <property type="match status" value="1"/>
</dbReference>
<dbReference type="Pfam" id="PF00646">
    <property type="entry name" value="F-box"/>
    <property type="match status" value="1"/>
</dbReference>
<dbReference type="Pfam" id="PF07734">
    <property type="entry name" value="FBA_1"/>
    <property type="match status" value="1"/>
</dbReference>
<dbReference type="SMART" id="SM00256">
    <property type="entry name" value="FBOX"/>
    <property type="match status" value="1"/>
</dbReference>
<dbReference type="SUPFAM" id="SSF81383">
    <property type="entry name" value="F-box domain"/>
    <property type="match status" value="1"/>
</dbReference>
<dbReference type="PROSITE" id="PS50181">
    <property type="entry name" value="FBOX"/>
    <property type="match status" value="1"/>
</dbReference>
<sequence>MTTICDLPRDLVARILSRVPLTSMRRVRFTCKRWNTISKDPSFAKTHFGKAARQFIMMSQSRVSLMSVKLHGDGNEDELADPYIYEGYRLDVYALGYDKNLKNHKILRFVDSYEPAVKHSIIEHEIFDLKSNAWRVLDATPDWEIDSYQRGVSLKGNTYFFAKEKIVVEGDDVVVIEDFKDFLICFDFTSERFNLDHVCLYRFTLTMERPVREEQLAVLYQQDTCLMEIWVTNKIEPDVVSWSKVFLAVDMEPLTGSFIPFAFFAGSFFIDEEKKIAVVFDKDQEEINDRAYLIGENGYYKEVDLGYMNGYYQQQVDPRGPDPVFPLVCSYSPSLVTIPQGTRGKRKERDY</sequence>
<proteinExistence type="predicted"/>
<protein>
    <recommendedName>
        <fullName>Putative F-box protein At4g09790</fullName>
    </recommendedName>
</protein>
<evidence type="ECO:0000255" key="1">
    <source>
        <dbReference type="PROSITE-ProRule" id="PRU00080"/>
    </source>
</evidence>
<gene>
    <name type="ordered locus">At4g09790</name>
    <name type="ORF">F17A8.140</name>
</gene>